<comment type="function">
    <text evidence="1">Mitochondrial membrane ATP synthase (F(1)F(0) ATP synthase or Complex V) produces ATP from ADP in the presence of a proton gradient across the membrane which is generated by electron transport complexes of the respiratory chain. F-type ATPases consist of two structural domains, F(1) - containing the extramembraneous catalytic core and F(0) - containing the membrane proton channel, linked together by a central stalk and a peripheral stalk. During catalysis, ATP synthesis in the catalytic domain of F(1) is coupled via a rotary mechanism of the central stalk subunits to proton translocation. Part of the complex F(0) domain. Minor subunit located with subunit a in the membrane (By similarity).</text>
</comment>
<comment type="subunit">
    <text evidence="1">F-type ATPases have 2 components, CF(1) - the catalytic core - and CF(0) - the membrane proton channel.</text>
</comment>
<comment type="subcellular location">
    <subcellularLocation>
        <location>Mitochondrion membrane</location>
        <topology>Single-pass membrane protein</topology>
    </subcellularLocation>
</comment>
<comment type="similarity">
    <text evidence="3">Belongs to the ATPase protein 8 family.</text>
</comment>
<geneLocation type="mitochondrion"/>
<keyword id="KW-0066">ATP synthesis</keyword>
<keyword id="KW-0138">CF(0)</keyword>
<keyword id="KW-0375">Hydrogen ion transport</keyword>
<keyword id="KW-0406">Ion transport</keyword>
<keyword id="KW-0472">Membrane</keyword>
<keyword id="KW-0496">Mitochondrion</keyword>
<keyword id="KW-0812">Transmembrane</keyword>
<keyword id="KW-1133">Transmembrane helix</keyword>
<keyword id="KW-0813">Transport</keyword>
<gene>
    <name type="primary">MT-ATP8</name>
    <name type="synonym">ATP8</name>
    <name type="synonym">ATPASE8</name>
    <name type="synonym">MTATP8</name>
</gene>
<feature type="chain" id="PRO_0000195487" description="ATP synthase protein 8">
    <location>
        <begin position="1"/>
        <end position="54"/>
    </location>
</feature>
<feature type="transmembrane region" description="Helical" evidence="2">
    <location>
        <begin position="9"/>
        <end position="29"/>
    </location>
</feature>
<sequence length="54" mass="6422">MPQLEFTWWIINFFIVWTADFTLLIVLSIPNLSTPTTLSKQLDINKSHVTWQWS</sequence>
<proteinExistence type="inferred from homology"/>
<dbReference type="EMBL" id="X80396">
    <property type="protein sequence ID" value="CAB93002.1"/>
    <property type="molecule type" value="Genomic_DNA"/>
</dbReference>
<dbReference type="RefSeq" id="NP_007347.2">
    <property type="nucleotide sequence ID" value="NC_001770.1"/>
</dbReference>
<dbReference type="SMR" id="Q9MJC0"/>
<dbReference type="GO" id="GO:0031966">
    <property type="term" value="C:mitochondrial membrane"/>
    <property type="evidence" value="ECO:0007669"/>
    <property type="project" value="UniProtKB-SubCell"/>
</dbReference>
<dbReference type="GO" id="GO:0045259">
    <property type="term" value="C:proton-transporting ATP synthase complex"/>
    <property type="evidence" value="ECO:0007669"/>
    <property type="project" value="UniProtKB-KW"/>
</dbReference>
<dbReference type="GO" id="GO:0015078">
    <property type="term" value="F:proton transmembrane transporter activity"/>
    <property type="evidence" value="ECO:0007669"/>
    <property type="project" value="InterPro"/>
</dbReference>
<dbReference type="GO" id="GO:0015986">
    <property type="term" value="P:proton motive force-driven ATP synthesis"/>
    <property type="evidence" value="ECO:0007669"/>
    <property type="project" value="InterPro"/>
</dbReference>
<dbReference type="InterPro" id="IPR001421">
    <property type="entry name" value="ATP8_metazoa"/>
</dbReference>
<dbReference type="Pfam" id="PF00895">
    <property type="entry name" value="ATP-synt_8"/>
    <property type="match status" value="1"/>
</dbReference>
<organism>
    <name type="scientific">Arbacia lixula</name>
    <name type="common">Black urchin</name>
    <name type="synonym">Echinus lixula</name>
    <dbReference type="NCBI Taxonomy" id="7640"/>
    <lineage>
        <taxon>Eukaryota</taxon>
        <taxon>Metazoa</taxon>
        <taxon>Echinodermata</taxon>
        <taxon>Eleutherozoa</taxon>
        <taxon>Echinozoa</taxon>
        <taxon>Echinoidea</taxon>
        <taxon>Euechinoidea</taxon>
        <taxon>Echinacea</taxon>
        <taxon>Arbacioida</taxon>
        <taxon>Arbaciidae</taxon>
        <taxon>Arbacia</taxon>
    </lineage>
</organism>
<reference key="1">
    <citation type="journal article" date="1996" name="Mol. Phylogenet. Evol.">
        <title>Complete sequence of the mitochondrial DNA in the sea urchin Arbacia lixula: conserved features of the echinoid mitochondrial genome.</title>
        <authorList>
            <person name="De Giorgi C."/>
            <person name="Martiradonna A."/>
            <person name="Lanave C."/>
            <person name="Saccone C."/>
        </authorList>
    </citation>
    <scope>NUCLEOTIDE SEQUENCE [GENOMIC DNA]</scope>
    <source>
        <tissue>Egg</tissue>
    </source>
</reference>
<accession>Q9MJC0</accession>
<protein>
    <recommendedName>
        <fullName>ATP synthase protein 8</fullName>
    </recommendedName>
    <alternativeName>
        <fullName>A6L</fullName>
    </alternativeName>
    <alternativeName>
        <fullName>F-ATPase subunit 8</fullName>
    </alternativeName>
</protein>
<evidence type="ECO:0000250" key="1"/>
<evidence type="ECO:0000255" key="2"/>
<evidence type="ECO:0000305" key="3"/>
<name>ATP8_ARBLI</name>